<protein>
    <recommendedName>
        <fullName evidence="1">Large-conductance mechanosensitive channel</fullName>
    </recommendedName>
</protein>
<gene>
    <name evidence="1" type="primary">mscL</name>
    <name type="ordered locus">Avin_41090</name>
</gene>
<comment type="function">
    <text evidence="1">Channel that opens in response to stretch forces in the membrane lipid bilayer. May participate in the regulation of osmotic pressure changes within the cell.</text>
</comment>
<comment type="subunit">
    <text evidence="1">Homopentamer.</text>
</comment>
<comment type="subcellular location">
    <subcellularLocation>
        <location evidence="1">Cell inner membrane</location>
        <topology evidence="1">Multi-pass membrane protein</topology>
    </subcellularLocation>
</comment>
<comment type="similarity">
    <text evidence="1">Belongs to the MscL family.</text>
</comment>
<organism>
    <name type="scientific">Azotobacter vinelandii (strain DJ / ATCC BAA-1303)</name>
    <dbReference type="NCBI Taxonomy" id="322710"/>
    <lineage>
        <taxon>Bacteria</taxon>
        <taxon>Pseudomonadati</taxon>
        <taxon>Pseudomonadota</taxon>
        <taxon>Gammaproteobacteria</taxon>
        <taxon>Pseudomonadales</taxon>
        <taxon>Pseudomonadaceae</taxon>
        <taxon>Azotobacter</taxon>
    </lineage>
</organism>
<proteinExistence type="inferred from homology"/>
<reference key="1">
    <citation type="journal article" date="2009" name="J. Bacteriol.">
        <title>Genome sequence of Azotobacter vinelandii, an obligate aerobe specialized to support diverse anaerobic metabolic processes.</title>
        <authorList>
            <person name="Setubal J.C."/>
            <person name="Dos Santos P."/>
            <person name="Goldman B.S."/>
            <person name="Ertesvaag H."/>
            <person name="Espin G."/>
            <person name="Rubio L.M."/>
            <person name="Valla S."/>
            <person name="Almeida N.F."/>
            <person name="Balasubramanian D."/>
            <person name="Cromes L."/>
            <person name="Curatti L."/>
            <person name="Du Z."/>
            <person name="Godsy E."/>
            <person name="Goodner B."/>
            <person name="Hellner-Burris K."/>
            <person name="Hernandez J.A."/>
            <person name="Houmiel K."/>
            <person name="Imperial J."/>
            <person name="Kennedy C."/>
            <person name="Larson T.J."/>
            <person name="Latreille P."/>
            <person name="Ligon L.S."/>
            <person name="Lu J."/>
            <person name="Maerk M."/>
            <person name="Miller N.M."/>
            <person name="Norton S."/>
            <person name="O'Carroll I.P."/>
            <person name="Paulsen I."/>
            <person name="Raulfs E.C."/>
            <person name="Roemer R."/>
            <person name="Rosser J."/>
            <person name="Segura D."/>
            <person name="Slater S."/>
            <person name="Stricklin S.L."/>
            <person name="Studholme D.J."/>
            <person name="Sun J."/>
            <person name="Viana C.J."/>
            <person name="Wallin E."/>
            <person name="Wang B."/>
            <person name="Wheeler C."/>
            <person name="Zhu H."/>
            <person name="Dean D.R."/>
            <person name="Dixon R."/>
            <person name="Wood D."/>
        </authorList>
    </citation>
    <scope>NUCLEOTIDE SEQUENCE [LARGE SCALE GENOMIC DNA]</scope>
    <source>
        <strain>DJ / ATCC BAA-1303</strain>
    </source>
</reference>
<sequence>MGMLSEFKAFAVKGNVVDMAVGIIIGAAFGKIVSSFVGDVIMPPLGLLIGGVDFSDLAITLKQAQGDMPAVVLAYGRFIQTVIDFLIIAFAIFIGVKALNQLKRKEAEAPSLPPAPTRDQQLLEEIRDLLKTRGKS</sequence>
<keyword id="KW-0997">Cell inner membrane</keyword>
<keyword id="KW-1003">Cell membrane</keyword>
<keyword id="KW-0407">Ion channel</keyword>
<keyword id="KW-0406">Ion transport</keyword>
<keyword id="KW-0472">Membrane</keyword>
<keyword id="KW-0812">Transmembrane</keyword>
<keyword id="KW-1133">Transmembrane helix</keyword>
<keyword id="KW-0813">Transport</keyword>
<accession>C1DER3</accession>
<feature type="chain" id="PRO_1000202972" description="Large-conductance mechanosensitive channel">
    <location>
        <begin position="1"/>
        <end position="136"/>
    </location>
</feature>
<feature type="transmembrane region" description="Helical" evidence="1">
    <location>
        <begin position="9"/>
        <end position="29"/>
    </location>
</feature>
<feature type="transmembrane region" description="Helical" evidence="1">
    <location>
        <begin position="78"/>
        <end position="98"/>
    </location>
</feature>
<name>MSCL_AZOVD</name>
<evidence type="ECO:0000255" key="1">
    <source>
        <dbReference type="HAMAP-Rule" id="MF_00115"/>
    </source>
</evidence>
<dbReference type="EMBL" id="CP001157">
    <property type="protein sequence ID" value="ACO80242.1"/>
    <property type="molecule type" value="Genomic_DNA"/>
</dbReference>
<dbReference type="RefSeq" id="WP_012702615.1">
    <property type="nucleotide sequence ID" value="NC_012560.1"/>
</dbReference>
<dbReference type="SMR" id="C1DER3"/>
<dbReference type="STRING" id="322710.Avin_41090"/>
<dbReference type="EnsemblBacteria" id="ACO80242">
    <property type="protein sequence ID" value="ACO80242"/>
    <property type="gene ID" value="Avin_41090"/>
</dbReference>
<dbReference type="GeneID" id="88187041"/>
<dbReference type="KEGG" id="avn:Avin_41090"/>
<dbReference type="eggNOG" id="COG1970">
    <property type="taxonomic scope" value="Bacteria"/>
</dbReference>
<dbReference type="HOGENOM" id="CLU_095787_0_0_6"/>
<dbReference type="OrthoDB" id="9810350at2"/>
<dbReference type="Proteomes" id="UP000002424">
    <property type="component" value="Chromosome"/>
</dbReference>
<dbReference type="GO" id="GO:0005886">
    <property type="term" value="C:plasma membrane"/>
    <property type="evidence" value="ECO:0007669"/>
    <property type="project" value="UniProtKB-SubCell"/>
</dbReference>
<dbReference type="GO" id="GO:0008381">
    <property type="term" value="F:mechanosensitive monoatomic ion channel activity"/>
    <property type="evidence" value="ECO:0007669"/>
    <property type="project" value="UniProtKB-UniRule"/>
</dbReference>
<dbReference type="FunFam" id="1.10.1200.120:FF:000001">
    <property type="entry name" value="Large-conductance mechanosensitive channel"/>
    <property type="match status" value="1"/>
</dbReference>
<dbReference type="Gene3D" id="1.10.1200.120">
    <property type="entry name" value="Large-conductance mechanosensitive channel, MscL, domain 1"/>
    <property type="match status" value="1"/>
</dbReference>
<dbReference type="HAMAP" id="MF_00115">
    <property type="entry name" value="MscL"/>
    <property type="match status" value="1"/>
</dbReference>
<dbReference type="InterPro" id="IPR019823">
    <property type="entry name" value="Mechanosensitive_channel_CS"/>
</dbReference>
<dbReference type="InterPro" id="IPR001185">
    <property type="entry name" value="MS_channel"/>
</dbReference>
<dbReference type="InterPro" id="IPR037673">
    <property type="entry name" value="MSC/AndL"/>
</dbReference>
<dbReference type="InterPro" id="IPR036019">
    <property type="entry name" value="MscL_channel"/>
</dbReference>
<dbReference type="NCBIfam" id="TIGR00220">
    <property type="entry name" value="mscL"/>
    <property type="match status" value="1"/>
</dbReference>
<dbReference type="NCBIfam" id="NF001843">
    <property type="entry name" value="PRK00567.1-4"/>
    <property type="match status" value="1"/>
</dbReference>
<dbReference type="NCBIfam" id="NF010557">
    <property type="entry name" value="PRK13952.1"/>
    <property type="match status" value="1"/>
</dbReference>
<dbReference type="PANTHER" id="PTHR30266:SF2">
    <property type="entry name" value="LARGE-CONDUCTANCE MECHANOSENSITIVE CHANNEL"/>
    <property type="match status" value="1"/>
</dbReference>
<dbReference type="PANTHER" id="PTHR30266">
    <property type="entry name" value="MECHANOSENSITIVE CHANNEL MSCL"/>
    <property type="match status" value="1"/>
</dbReference>
<dbReference type="Pfam" id="PF01741">
    <property type="entry name" value="MscL"/>
    <property type="match status" value="1"/>
</dbReference>
<dbReference type="PRINTS" id="PR01264">
    <property type="entry name" value="MECHCHANNEL"/>
</dbReference>
<dbReference type="SUPFAM" id="SSF81330">
    <property type="entry name" value="Gated mechanosensitive channel"/>
    <property type="match status" value="1"/>
</dbReference>
<dbReference type="PROSITE" id="PS01327">
    <property type="entry name" value="MSCL"/>
    <property type="match status" value="1"/>
</dbReference>